<comment type="function">
    <text evidence="3">Acetyltransferase involved in the post-translational regulation of the central metabolic enzyme isocitrate dehydrogenase 1 (ICDH-1) through lysine acetylation (PubMed:28250431). Catalyzes the acetylation of ICDH-1 at Lys-30 and Lys-129, using acetyl-CoA as a donor, leading to a reduction of ICDH-1 enzyme activity (PubMed:28250431). Can also use propionyl-CoA and succinyl-CoA as donors (PubMed:28250431). Cannot act on the isocitrate dehydrogenase 2 (ICDH-2) (PubMed:28250431). Might play a role in regulating the TCA cycle and methylcitrate cycle when M.tuberculosis utilizes fatty acid as carbon source (PubMed:28250431).</text>
</comment>
<comment type="function">
    <text evidence="4">In addition, it can acetylate the amino group of isoniazid (INH), one of the first-line drugs used for the treatment of tuberculosis, thereby canceling out the drug toxicity (PubMed:33106268). Acts by catalyzing the transfer of an acetyl group from acetyl-CoA to INH (PubMed:33106268). Following acetylation, INH is broken down into isonicotinic acid and acetylhydrazine (PubMed:33106268). M.smegmatis and M.tuberculosis H37Ra strains overexpressing Rv2170 are resistant to INH (PubMed:33106268). Has little or no acetyltransferase activity with other antibiotics such as streptomycin, neomycin, kanamycin, amikacin, apramycin and gentamicin (PubMed:33106268).</text>
</comment>
<comment type="catalytic activity">
    <reaction evidence="3">
        <text>L-lysyl-[protein] + acetyl-CoA = N(6)-acetyl-L-lysyl-[protein] + CoA + H(+)</text>
        <dbReference type="Rhea" id="RHEA:45948"/>
        <dbReference type="Rhea" id="RHEA-COMP:9752"/>
        <dbReference type="Rhea" id="RHEA-COMP:10731"/>
        <dbReference type="ChEBI" id="CHEBI:15378"/>
        <dbReference type="ChEBI" id="CHEBI:29969"/>
        <dbReference type="ChEBI" id="CHEBI:57287"/>
        <dbReference type="ChEBI" id="CHEBI:57288"/>
        <dbReference type="ChEBI" id="CHEBI:61930"/>
    </reaction>
    <physiologicalReaction direction="left-to-right" evidence="3">
        <dbReference type="Rhea" id="RHEA:45949"/>
    </physiologicalReaction>
</comment>
<comment type="catalytic activity">
    <reaction evidence="3">
        <text>propanoyl-CoA + L-lysyl-[protein] = N(6)-propanoyl-L-lysyl-[protein] + CoA + H(+)</text>
        <dbReference type="Rhea" id="RHEA:54020"/>
        <dbReference type="Rhea" id="RHEA-COMP:9752"/>
        <dbReference type="Rhea" id="RHEA-COMP:13758"/>
        <dbReference type="ChEBI" id="CHEBI:15378"/>
        <dbReference type="ChEBI" id="CHEBI:29969"/>
        <dbReference type="ChEBI" id="CHEBI:57287"/>
        <dbReference type="ChEBI" id="CHEBI:57392"/>
        <dbReference type="ChEBI" id="CHEBI:138019"/>
    </reaction>
</comment>
<comment type="catalytic activity">
    <reaction evidence="3">
        <text>succinyl-CoA + L-lysyl-[protein] = N(6)-succinyl-L-lysyl-[protein] + CoA + H(+)</text>
        <dbReference type="Rhea" id="RHEA:16261"/>
        <dbReference type="Rhea" id="RHEA-COMP:9752"/>
        <dbReference type="Rhea" id="RHEA-COMP:11877"/>
        <dbReference type="ChEBI" id="CHEBI:15378"/>
        <dbReference type="ChEBI" id="CHEBI:29969"/>
        <dbReference type="ChEBI" id="CHEBI:57287"/>
        <dbReference type="ChEBI" id="CHEBI:57292"/>
        <dbReference type="ChEBI" id="CHEBI:87830"/>
    </reaction>
</comment>
<comment type="biophysicochemical properties">
    <kinetics>
        <KM evidence="4">1.28 mM for isoniazid</KM>
    </kinetics>
</comment>
<comment type="disruption phenotype">
    <text evidence="3">Inactivation of the gene does not lead to general growth defects, and the deletion mutant grows to levels comparable to wild-type strain on all carbon sources including stearic acid (PubMed:28250431). Mutations in this gene restore the growth delay in a icl1 deletion mutant (PubMed:28250431).</text>
</comment>
<comment type="similarity">
    <text evidence="6">Belongs to the acetyltransferase family.</text>
</comment>
<feature type="chain" id="PRO_0000461138" description="GCN5-like protein acetyltransferase Rv2170">
    <location>
        <begin position="1"/>
        <end position="206"/>
    </location>
</feature>
<feature type="domain" description="N-acetyltransferase" evidence="2">
    <location>
        <begin position="44"/>
        <end position="205"/>
    </location>
</feature>
<feature type="active site" description="Proton donor" evidence="1">
    <location>
        <position position="176"/>
    </location>
</feature>
<feature type="mutagenesis site" description="Unable to inactivate INH." evidence="4">
    <original>R</original>
    <variation>A</variation>
    <location>
        <position position="16"/>
    </location>
</feature>
<feature type="mutagenesis site" description="Unable to inactivate INH." evidence="4">
    <original>Y</original>
    <variation>A</variation>
    <location>
        <position position="24"/>
    </location>
</feature>
<feature type="mutagenesis site" description="Unable to inactivate INH." evidence="4">
    <original>E</original>
    <variation>A</variation>
    <location>
        <position position="129"/>
    </location>
</feature>
<gene>
    <name evidence="7" type="ordered locus">Rv2170</name>
</gene>
<sequence>MAIFLIDLPPSDMERRLGDALTVYVDAMRYPRGTETLRAPMWLEHIRRRGWQAVAAVEVTAAEQAEAADTTALPSAAELSNAPMLGVAYGYPGAPGQWWQQQVVLGLQRSGFPRLAIARLMTSYFELTELHILPRAQGRGLGEALARRLLAGRDEDNVLLSTPETNGEDNRAWRLYRRLGFTDIIRGYHFAGDPRAFAILGRTLPL</sequence>
<dbReference type="EC" id="2.3.1.-" evidence="3"/>
<dbReference type="EMBL" id="AL123456">
    <property type="protein sequence ID" value="CCP44947.1"/>
    <property type="molecule type" value="Genomic_DNA"/>
</dbReference>
<dbReference type="RefSeq" id="NP_216686.1">
    <property type="nucleotide sequence ID" value="NC_000962.3"/>
</dbReference>
<dbReference type="RefSeq" id="WP_003411235.1">
    <property type="nucleotide sequence ID" value="NZ_NVQJ01000083.1"/>
</dbReference>
<dbReference type="SMR" id="O53504"/>
<dbReference type="STRING" id="83332.Rv2170"/>
<dbReference type="PaxDb" id="83332-Rv2170"/>
<dbReference type="DNASU" id="888170"/>
<dbReference type="GeneID" id="888170"/>
<dbReference type="KEGG" id="mtu:Rv2170"/>
<dbReference type="KEGG" id="mtv:RVBD_2170"/>
<dbReference type="PATRIC" id="fig|83332.111.peg.2416"/>
<dbReference type="TubercuList" id="Rv2170"/>
<dbReference type="eggNOG" id="COG0456">
    <property type="taxonomic scope" value="Bacteria"/>
</dbReference>
<dbReference type="InParanoid" id="O53504"/>
<dbReference type="OrthoDB" id="3692150at2"/>
<dbReference type="Proteomes" id="UP000001584">
    <property type="component" value="Chromosome"/>
</dbReference>
<dbReference type="GO" id="GO:0016747">
    <property type="term" value="F:acyltransferase activity, transferring groups other than amino-acyl groups"/>
    <property type="evidence" value="ECO:0007669"/>
    <property type="project" value="InterPro"/>
</dbReference>
<dbReference type="GO" id="GO:0046677">
    <property type="term" value="P:response to antibiotic"/>
    <property type="evidence" value="ECO:0007669"/>
    <property type="project" value="UniProtKB-KW"/>
</dbReference>
<dbReference type="Gene3D" id="3.40.630.30">
    <property type="match status" value="1"/>
</dbReference>
<dbReference type="InterPro" id="IPR016181">
    <property type="entry name" value="Acyl_CoA_acyltransferase"/>
</dbReference>
<dbReference type="InterPro" id="IPR013653">
    <property type="entry name" value="GCN5-like_dom"/>
</dbReference>
<dbReference type="InterPro" id="IPR000182">
    <property type="entry name" value="GNAT_dom"/>
</dbReference>
<dbReference type="Pfam" id="PF08445">
    <property type="entry name" value="FR47"/>
    <property type="match status" value="1"/>
</dbReference>
<dbReference type="SUPFAM" id="SSF55729">
    <property type="entry name" value="Acyl-CoA N-acyltransferases (Nat)"/>
    <property type="match status" value="1"/>
</dbReference>
<dbReference type="PROSITE" id="PS51186">
    <property type="entry name" value="GNAT"/>
    <property type="match status" value="1"/>
</dbReference>
<organism>
    <name type="scientific">Mycobacterium tuberculosis (strain ATCC 25618 / H37Rv)</name>
    <dbReference type="NCBI Taxonomy" id="83332"/>
    <lineage>
        <taxon>Bacteria</taxon>
        <taxon>Bacillati</taxon>
        <taxon>Actinomycetota</taxon>
        <taxon>Actinomycetes</taxon>
        <taxon>Mycobacteriales</taxon>
        <taxon>Mycobacteriaceae</taxon>
        <taxon>Mycobacterium</taxon>
        <taxon>Mycobacterium tuberculosis complex</taxon>
    </lineage>
</organism>
<name>IDHAT_MYCTU</name>
<accession>O53504</accession>
<accession>F2GK02</accession>
<accession>I6Y008</accession>
<accession>Q7D7F4</accession>
<reference key="1">
    <citation type="journal article" date="1998" name="Nature">
        <title>Deciphering the biology of Mycobacterium tuberculosis from the complete genome sequence.</title>
        <authorList>
            <person name="Cole S.T."/>
            <person name="Brosch R."/>
            <person name="Parkhill J."/>
            <person name="Garnier T."/>
            <person name="Churcher C.M."/>
            <person name="Harris D.E."/>
            <person name="Gordon S.V."/>
            <person name="Eiglmeier K."/>
            <person name="Gas S."/>
            <person name="Barry C.E. III"/>
            <person name="Tekaia F."/>
            <person name="Badcock K."/>
            <person name="Basham D."/>
            <person name="Brown D."/>
            <person name="Chillingworth T."/>
            <person name="Connor R."/>
            <person name="Davies R.M."/>
            <person name="Devlin K."/>
            <person name="Feltwell T."/>
            <person name="Gentles S."/>
            <person name="Hamlin N."/>
            <person name="Holroyd S."/>
            <person name="Hornsby T."/>
            <person name="Jagels K."/>
            <person name="Krogh A."/>
            <person name="McLean J."/>
            <person name="Moule S."/>
            <person name="Murphy L.D."/>
            <person name="Oliver S."/>
            <person name="Osborne J."/>
            <person name="Quail M.A."/>
            <person name="Rajandream M.A."/>
            <person name="Rogers J."/>
            <person name="Rutter S."/>
            <person name="Seeger K."/>
            <person name="Skelton S."/>
            <person name="Squares S."/>
            <person name="Squares R."/>
            <person name="Sulston J.E."/>
            <person name="Taylor K."/>
            <person name="Whitehead S."/>
            <person name="Barrell B.G."/>
        </authorList>
    </citation>
    <scope>NUCLEOTIDE SEQUENCE [LARGE SCALE GENOMIC DNA]</scope>
    <source>
        <strain>ATCC 25618 / H37Rv</strain>
    </source>
</reference>
<reference key="2">
    <citation type="journal article" date="2011" name="Mol. Cell. Proteomics">
        <title>Proteogenomic analysis of Mycobacterium tuberculosis by high resolution mass spectrometry.</title>
        <authorList>
            <person name="Kelkar D.S."/>
            <person name="Kumar D."/>
            <person name="Kumar P."/>
            <person name="Balakrishnan L."/>
            <person name="Muthusamy B."/>
            <person name="Yadav A.K."/>
            <person name="Shrivastava P."/>
            <person name="Marimuthu A."/>
            <person name="Anand S."/>
            <person name="Sundaram H."/>
            <person name="Kingsbury R."/>
            <person name="Harsha H.C."/>
            <person name="Nair B."/>
            <person name="Prasad T.S."/>
            <person name="Chauhan D.S."/>
            <person name="Katoch K."/>
            <person name="Katoch V.M."/>
            <person name="Kumar P."/>
            <person name="Chaerkady R."/>
            <person name="Ramachandran S."/>
            <person name="Dash D."/>
            <person name="Pandey A."/>
        </authorList>
    </citation>
    <scope>IDENTIFICATION BY MASS SPECTROMETRY [LARGE SCALE ANALYSIS]</scope>
    <source>
        <strain>ATCC 25618 / H37Rv</strain>
    </source>
</reference>
<reference key="3">
    <citation type="journal article" date="2017" name="Sci. Rep.">
        <title>Novel protein acetyltransferase, Rv2170, modulates carbon and energy metabolism in Mycobacterium tuberculosis.</title>
        <authorList>
            <person name="Lee W."/>
            <person name="VanderVen B.C."/>
            <person name="Walker S."/>
            <person name="Russell D.G."/>
        </authorList>
    </citation>
    <scope>FUNCTION</scope>
    <scope>CATALYTIC ACTIVITY</scope>
    <scope>DISRUPTION PHENOTYPE</scope>
    <source>
        <strain>H37Rv</strain>
    </source>
</reference>
<reference key="4">
    <citation type="journal article" date="2020" name="Antimicrob. Agents Chemother.">
        <title>Acetylation of Isoniazid Is a Novel Mechanism of Isoniazid Resistance in Mycobacterium tuberculosis.</title>
        <authorList>
            <person name="Arun K.B."/>
            <person name="Madhavan A."/>
            <person name="Abraham B."/>
            <person name="Balaji M."/>
            <person name="Sivakumar K.C."/>
            <person name="Nisha P."/>
            <person name="Kumar R.A."/>
        </authorList>
    </citation>
    <scope>FUNCTION IN ISONIAZID RESISTANCE</scope>
    <scope>BIOPHYSICOCHEMICAL PROPERTIES</scope>
    <scope>MUTAGENESIS OF ARG-16; TYR-24 AND GLU-129</scope>
    <source>
        <strain>H37Rv</strain>
    </source>
</reference>
<evidence type="ECO:0000250" key="1">
    <source>
        <dbReference type="UniProtKB" id="P0A951"/>
    </source>
</evidence>
<evidence type="ECO:0000255" key="2">
    <source>
        <dbReference type="PROSITE-ProRule" id="PRU00532"/>
    </source>
</evidence>
<evidence type="ECO:0000269" key="3">
    <source>
    </source>
</evidence>
<evidence type="ECO:0000269" key="4">
    <source>
    </source>
</evidence>
<evidence type="ECO:0000303" key="5">
    <source>
    </source>
</evidence>
<evidence type="ECO:0000305" key="6"/>
<evidence type="ECO:0000312" key="7">
    <source>
        <dbReference type="EMBL" id="CCP44947.1"/>
    </source>
</evidence>
<proteinExistence type="evidence at protein level"/>
<keyword id="KW-0012">Acyltransferase</keyword>
<keyword id="KW-0046">Antibiotic resistance</keyword>
<keyword id="KW-1185">Reference proteome</keyword>
<keyword id="KW-0808">Transferase</keyword>
<protein>
    <recommendedName>
        <fullName evidence="5">GCN5-like protein acetyltransferase Rv2170</fullName>
        <ecNumber evidence="3">2.3.1.-</ecNumber>
    </recommendedName>
</protein>